<name>H2A3_WHEAT</name>
<comment type="function">
    <text>Core component of nucleosome. Nucleosomes wrap and compact DNA into chromatin, limiting DNA accessibility to the cellular machineries which require DNA as a template. Histones thereby play a central role in transcription regulation, DNA repair, DNA replication and chromosomal stability. DNA accessibility is regulated via a complex set of post-translational modifications of histones, also called histone code, and nucleosome remodeling.</text>
</comment>
<comment type="subunit">
    <text>The nucleosome is a histone octamer containing two molecules each of H2A, H2B, H3 and H4 assembled in one H3-H4 heterotetramer and two H2A-H2B heterodimers. The octamer wraps approximately 147 bp of DNA.</text>
</comment>
<comment type="subcellular location">
    <subcellularLocation>
        <location>Nucleus</location>
    </subcellularLocation>
    <subcellularLocation>
        <location>Chromosome</location>
    </subcellularLocation>
</comment>
<comment type="domain">
    <text>Contains 2 SPKK motifs which may interact with the minor groove of A/T-rich DNA sites. Phosphorylation of this motif may regulate DNA binding. This motif is reiterated in both termini of histone H1 and in the N-terminus of sea urchin histones H2B, but its presence in the C-terminus seems to be unique to plant H2A.</text>
</comment>
<comment type="PTM">
    <text evidence="2">Phosphorylated within its C-terminal part, probably at the SPKK motifs.</text>
</comment>
<comment type="similarity">
    <text evidence="4">Belongs to the histone H2A family.</text>
</comment>
<proteinExistence type="evidence at protein level"/>
<keyword id="KW-0007">Acetylation</keyword>
<keyword id="KW-0158">Chromosome</keyword>
<keyword id="KW-0903">Direct protein sequencing</keyword>
<keyword id="KW-0238">DNA-binding</keyword>
<keyword id="KW-0544">Nucleosome core</keyword>
<keyword id="KW-0539">Nucleus</keyword>
<keyword id="KW-0597">Phosphoprotein</keyword>
<keyword id="KW-1185">Reference proteome</keyword>
<organism>
    <name type="scientific">Triticum aestivum</name>
    <name type="common">Wheat</name>
    <dbReference type="NCBI Taxonomy" id="4565"/>
    <lineage>
        <taxon>Eukaryota</taxon>
        <taxon>Viridiplantae</taxon>
        <taxon>Streptophyta</taxon>
        <taxon>Embryophyta</taxon>
        <taxon>Tracheophyta</taxon>
        <taxon>Spermatophyta</taxon>
        <taxon>Magnoliopsida</taxon>
        <taxon>Liliopsida</taxon>
        <taxon>Poales</taxon>
        <taxon>Poaceae</taxon>
        <taxon>BOP clade</taxon>
        <taxon>Pooideae</taxon>
        <taxon>Triticodae</taxon>
        <taxon>Triticeae</taxon>
        <taxon>Triticinae</taxon>
        <taxon>Triticum</taxon>
    </lineage>
</organism>
<dbReference type="PIR" id="A02604">
    <property type="entry name" value="HSWT93"/>
</dbReference>
<dbReference type="SMR" id="P02277"/>
<dbReference type="STRING" id="4565.P02277"/>
<dbReference type="iPTMnet" id="P02277"/>
<dbReference type="PaxDb" id="4565-Traes_1AS_6AA4114A2.1"/>
<dbReference type="eggNOG" id="KOG1756">
    <property type="taxonomic scope" value="Eukaryota"/>
</dbReference>
<dbReference type="Proteomes" id="UP000019116">
    <property type="component" value="Unplaced"/>
</dbReference>
<dbReference type="ExpressionAtlas" id="P02277">
    <property type="expression patterns" value="baseline and differential"/>
</dbReference>
<dbReference type="GO" id="GO:0000786">
    <property type="term" value="C:nucleosome"/>
    <property type="evidence" value="ECO:0000318"/>
    <property type="project" value="GO_Central"/>
</dbReference>
<dbReference type="GO" id="GO:0005634">
    <property type="term" value="C:nucleus"/>
    <property type="evidence" value="ECO:0000318"/>
    <property type="project" value="GO_Central"/>
</dbReference>
<dbReference type="GO" id="GO:0003677">
    <property type="term" value="F:DNA binding"/>
    <property type="evidence" value="ECO:0007669"/>
    <property type="project" value="UniProtKB-KW"/>
</dbReference>
<dbReference type="GO" id="GO:0046982">
    <property type="term" value="F:protein heterodimerization activity"/>
    <property type="evidence" value="ECO:0007669"/>
    <property type="project" value="InterPro"/>
</dbReference>
<dbReference type="GO" id="GO:0030527">
    <property type="term" value="F:structural constituent of chromatin"/>
    <property type="evidence" value="ECO:0000318"/>
    <property type="project" value="GO_Central"/>
</dbReference>
<dbReference type="GO" id="GO:0031507">
    <property type="term" value="P:heterochromatin formation"/>
    <property type="evidence" value="ECO:0000318"/>
    <property type="project" value="GO_Central"/>
</dbReference>
<dbReference type="CDD" id="cd00074">
    <property type="entry name" value="HFD_H2A"/>
    <property type="match status" value="1"/>
</dbReference>
<dbReference type="FunFam" id="1.10.20.10:FF:000026">
    <property type="entry name" value="Histone H2A"/>
    <property type="match status" value="1"/>
</dbReference>
<dbReference type="Gene3D" id="1.10.20.10">
    <property type="entry name" value="Histone, subunit A"/>
    <property type="match status" value="1"/>
</dbReference>
<dbReference type="InterPro" id="IPR009072">
    <property type="entry name" value="Histone-fold"/>
</dbReference>
<dbReference type="InterPro" id="IPR002119">
    <property type="entry name" value="Histone_H2A"/>
</dbReference>
<dbReference type="InterPro" id="IPR007125">
    <property type="entry name" value="Histone_H2A/H2B/H3"/>
</dbReference>
<dbReference type="InterPro" id="IPR032454">
    <property type="entry name" value="Histone_H2A_C"/>
</dbReference>
<dbReference type="InterPro" id="IPR032458">
    <property type="entry name" value="Histone_H2A_CS"/>
</dbReference>
<dbReference type="PANTHER" id="PTHR23430">
    <property type="entry name" value="HISTONE H2A"/>
    <property type="match status" value="1"/>
</dbReference>
<dbReference type="Pfam" id="PF00125">
    <property type="entry name" value="Histone"/>
    <property type="match status" value="1"/>
</dbReference>
<dbReference type="Pfam" id="PF16211">
    <property type="entry name" value="Histone_H2A_C"/>
    <property type="match status" value="1"/>
</dbReference>
<dbReference type="PRINTS" id="PR00620">
    <property type="entry name" value="HISTONEH2A"/>
</dbReference>
<dbReference type="SMART" id="SM00414">
    <property type="entry name" value="H2A"/>
    <property type="match status" value="1"/>
</dbReference>
<dbReference type="SUPFAM" id="SSF47113">
    <property type="entry name" value="Histone-fold"/>
    <property type="match status" value="1"/>
</dbReference>
<dbReference type="PROSITE" id="PS00046">
    <property type="entry name" value="HISTONE_H2A"/>
    <property type="match status" value="1"/>
</dbReference>
<accession>P02277</accession>
<protein>
    <recommendedName>
        <fullName>Histone H2A.2.2</fullName>
    </recommendedName>
</protein>
<sequence>MDASKLKKVAGKKFGGPRKKSVTRSIKAGLQFPVGRIGRYLKKGRYAQRVGSGAPVYLAAVLEYLAAEVLELAGNAAKDNKKSRIVPRHLLLAVRNDQELGRLLAGVTIAHGGVIPNINPVLLPKKAAEKAEKAGTKAKSPKKATKSPKKA</sequence>
<reference key="1">
    <citation type="journal article" date="1988" name="Eur. J. Biochem.">
        <title>The primary structure of the histone H2A(2) type from wheat germ. A core histone type with both, N-terminal and C-terminal extensions.</title>
        <authorList>
            <person name="Rodrigues J.A."/>
            <person name="Brandt W.F."/>
            <person name="von Holt C."/>
        </authorList>
    </citation>
    <scope>PROTEIN SEQUENCE</scope>
    <scope>ACETYLATION AT MET-1</scope>
    <source>
        <tissue>Germ</tissue>
    </source>
</reference>
<reference key="2">
    <citation type="journal article" date="1979" name="Biochim. Biophys. Acta">
        <title>Plant histone 2 from wheat germ, a family of histone H2a variants. Partial amino acid sequences.</title>
        <authorList>
            <person name="Rodrigues J.A."/>
            <person name="Brandt W.F."/>
            <person name="von Holt C."/>
        </authorList>
    </citation>
    <scope>PROTEIN SEQUENCE OF 1-37</scope>
    <source>
        <tissue>Germ</tissue>
    </source>
</reference>
<reference key="3">
    <citation type="journal article" date="1990" name="Plant Physiol.">
        <title>Phosphorylation of plant H2A histones.</title>
        <authorList>
            <person name="Green G.R."/>
            <person name="Gustavsen L.C."/>
            <person name="Poccia D.L."/>
        </authorList>
    </citation>
    <scope>PHOSPHORYLATION</scope>
</reference>
<evidence type="ECO:0000256" key="1">
    <source>
        <dbReference type="SAM" id="MobiDB-lite"/>
    </source>
</evidence>
<evidence type="ECO:0000269" key="2">
    <source>
    </source>
</evidence>
<evidence type="ECO:0000269" key="3">
    <source>
    </source>
</evidence>
<evidence type="ECO:0000305" key="4"/>
<feature type="chain" id="PRO_0000055293" description="Histone H2A.2.2">
    <location>
        <begin position="1"/>
        <end position="151"/>
    </location>
</feature>
<feature type="region of interest" description="Disordered" evidence="1">
    <location>
        <begin position="129"/>
        <end position="151"/>
    </location>
</feature>
<feature type="short sequence motif" description="SPKK motif 1">
    <location>
        <begin position="140"/>
        <end position="143"/>
    </location>
</feature>
<feature type="short sequence motif" description="SPKK motif 2">
    <location>
        <begin position="147"/>
        <end position="150"/>
    </location>
</feature>
<feature type="compositionally biased region" description="Basic residues" evidence="1">
    <location>
        <begin position="139"/>
        <end position="151"/>
    </location>
</feature>
<feature type="modified residue" description="N-acetylmethionine" evidence="3">
    <location>
        <position position="1"/>
    </location>
</feature>